<organism>
    <name type="scientific">Oryctolagus cuniculus</name>
    <name type="common">Rabbit</name>
    <dbReference type="NCBI Taxonomy" id="9986"/>
    <lineage>
        <taxon>Eukaryota</taxon>
        <taxon>Metazoa</taxon>
        <taxon>Chordata</taxon>
        <taxon>Craniata</taxon>
        <taxon>Vertebrata</taxon>
        <taxon>Euteleostomi</taxon>
        <taxon>Mammalia</taxon>
        <taxon>Eutheria</taxon>
        <taxon>Euarchontoglires</taxon>
        <taxon>Glires</taxon>
        <taxon>Lagomorpha</taxon>
        <taxon>Leporidae</taxon>
        <taxon>Oryctolagus</taxon>
    </lineage>
</organism>
<accession>P50482</accession>
<keyword id="KW-0050">Antiport</keyword>
<keyword id="KW-1003">Cell membrane</keyword>
<keyword id="KW-0325">Glycoprotein</keyword>
<keyword id="KW-0406">Ion transport</keyword>
<keyword id="KW-0472">Membrane</keyword>
<keyword id="KW-1185">Reference proteome</keyword>
<keyword id="KW-0915">Sodium</keyword>
<keyword id="KW-0739">Sodium transport</keyword>
<keyword id="KW-0812">Transmembrane</keyword>
<keyword id="KW-1133">Transmembrane helix</keyword>
<keyword id="KW-0813">Transport</keyword>
<protein>
    <recommendedName>
        <fullName>Sodium/hydrogen exchanger 2</fullName>
    </recommendedName>
    <alternativeName>
        <fullName>Na(+)/H(+) exchanger 2</fullName>
        <shortName>NHE-2</shortName>
    </alternativeName>
    <alternativeName>
        <fullName>Solute carrier family 9 member 2</fullName>
    </alternativeName>
</protein>
<gene>
    <name type="primary">SLC9A2</name>
    <name type="synonym">NHE2</name>
</gene>
<name>SL9A2_RABIT</name>
<sequence>MESAGTGRSLRTPPPRLLLLLLLQVAGPAGALAETLLNAPKAMGTSSSPLSPASVVAPGTTAFEESRLPVFTLDYPHVQIPFEITLWILLASLAKIGFHLYHKLPTIVPESCLLIMVGLLLGGIIFGVDEKSPPAMKTDVFFLYLLPPIVLDAGYFMPTRPFFENLGTIFWYAVVGTLWNSIGIGVSLFGICQIEAFGLSDITLLQNLLFGSLISAVDPVAVLAVFENIHVNEQLYILVFGESLLNDAVTVVLYNLFKSFCQMKTIETIDVFAGIANFFVVGIGGVLIGIFLGFIAAFTTRFTHNIRVIEPLFVFLYSYLSYITAEMFHLSGIMAITACAMTMNKYVEENVSQKSYTTIKYFMKMLSSVSETLIFIFMGVSTVGKNHEWNWAFVCFTLAFCLIWRALGVFVLTRVINWFRTIPLTFKDQFIIAYGGLRGAICFALVFLLPAAVFPRKKLFITAAIVVIFFTVFILGITIRPLVEFLDVKRSNKKQQAVSEEIHCRFFDHVKTGIEDVCGHWGHNFWRDKFKKFDDKYLRKLLIRENQPKSSIVSLYKKLEIKHAIEMAETGMISTVPSFASLNDCREEKIRKLTPGEMDEIREILSRNLYQIRQRTLSYNRHNLTADTSERQAKEILIRRRHSLRESIRKDNSLNRERRASTSTSRYLSLPKNTKLPEKLQKRKNISNADGDSSDSEADAGTTVLNLQPRARRFLPEPFSKKASQAYKMEWKNEVDAGSGQGQPSPPAAPRSKEGGTQTPAVLRQPLLSKDQGREDSLTEGGRPKPPPRLVRRASEPGNRKSRLGSDKP</sequence>
<dbReference type="EMBL" id="L13733">
    <property type="status" value="NOT_ANNOTATED_CDS"/>
    <property type="molecule type" value="mRNA"/>
</dbReference>
<dbReference type="PIR" id="A46747">
    <property type="entry name" value="A46747"/>
</dbReference>
<dbReference type="SMR" id="P50482"/>
<dbReference type="FunCoup" id="P50482">
    <property type="interactions" value="18"/>
</dbReference>
<dbReference type="STRING" id="9986.ENSOCUP00000004232"/>
<dbReference type="BindingDB" id="P50482"/>
<dbReference type="ChEMBL" id="CHEMBL3770"/>
<dbReference type="DrugCentral" id="P50482"/>
<dbReference type="GlyCosmos" id="P50482">
    <property type="glycosylation" value="1 site, No reported glycans"/>
</dbReference>
<dbReference type="PaxDb" id="9986-ENSOCUP00000004232"/>
<dbReference type="eggNOG" id="KOG1966">
    <property type="taxonomic scope" value="Eukaryota"/>
</dbReference>
<dbReference type="InParanoid" id="P50482"/>
<dbReference type="Proteomes" id="UP000001811">
    <property type="component" value="Unplaced"/>
</dbReference>
<dbReference type="GO" id="GO:0016324">
    <property type="term" value="C:apical plasma membrane"/>
    <property type="evidence" value="ECO:0000314"/>
    <property type="project" value="UniProtKB"/>
</dbReference>
<dbReference type="GO" id="GO:0031526">
    <property type="term" value="C:brush border membrane"/>
    <property type="evidence" value="ECO:0000314"/>
    <property type="project" value="UniProtKB"/>
</dbReference>
<dbReference type="GO" id="GO:0015386">
    <property type="term" value="F:potassium:proton antiporter activity"/>
    <property type="evidence" value="ECO:0007669"/>
    <property type="project" value="TreeGrafter"/>
</dbReference>
<dbReference type="GO" id="GO:0015385">
    <property type="term" value="F:sodium:proton antiporter activity"/>
    <property type="evidence" value="ECO:0000314"/>
    <property type="project" value="UniProtKB"/>
</dbReference>
<dbReference type="GO" id="GO:1902600">
    <property type="term" value="P:proton transmembrane transport"/>
    <property type="evidence" value="ECO:0000314"/>
    <property type="project" value="UniProtKB"/>
</dbReference>
<dbReference type="GO" id="GO:0051453">
    <property type="term" value="P:regulation of intracellular pH"/>
    <property type="evidence" value="ECO:0007669"/>
    <property type="project" value="TreeGrafter"/>
</dbReference>
<dbReference type="GO" id="GO:0098719">
    <property type="term" value="P:sodium ion import across plasma membrane"/>
    <property type="evidence" value="ECO:0000314"/>
    <property type="project" value="UniProtKB"/>
</dbReference>
<dbReference type="GO" id="GO:0035725">
    <property type="term" value="P:sodium ion transmembrane transport"/>
    <property type="evidence" value="ECO:0000314"/>
    <property type="project" value="UniProtKB"/>
</dbReference>
<dbReference type="Gene3D" id="6.10.140.1330">
    <property type="match status" value="1"/>
</dbReference>
<dbReference type="Gene3D" id="6.10.250.1040">
    <property type="match status" value="1"/>
</dbReference>
<dbReference type="Gene3D" id="6.10.250.2020">
    <property type="match status" value="1"/>
</dbReference>
<dbReference type="InterPro" id="IPR018422">
    <property type="entry name" value="Cation/H_exchanger_CPA1"/>
</dbReference>
<dbReference type="InterPro" id="IPR006153">
    <property type="entry name" value="Cation/H_exchanger_TM"/>
</dbReference>
<dbReference type="InterPro" id="IPR004709">
    <property type="entry name" value="NaH_exchanger"/>
</dbReference>
<dbReference type="InterPro" id="IPR001953">
    <property type="entry name" value="NHE-2/4"/>
</dbReference>
<dbReference type="InterPro" id="IPR032103">
    <property type="entry name" value="NHE_CaM-bd"/>
</dbReference>
<dbReference type="NCBIfam" id="TIGR00840">
    <property type="entry name" value="b_cpa1"/>
    <property type="match status" value="1"/>
</dbReference>
<dbReference type="PANTHER" id="PTHR10110">
    <property type="entry name" value="SODIUM/HYDROGEN EXCHANGER"/>
    <property type="match status" value="1"/>
</dbReference>
<dbReference type="PANTHER" id="PTHR10110:SF89">
    <property type="entry name" value="SODIUM_HYDROGEN EXCHANGER 2"/>
    <property type="match status" value="1"/>
</dbReference>
<dbReference type="Pfam" id="PF00999">
    <property type="entry name" value="Na_H_Exchanger"/>
    <property type="match status" value="1"/>
</dbReference>
<dbReference type="Pfam" id="PF16644">
    <property type="entry name" value="NEXCaM_BD"/>
    <property type="match status" value="1"/>
</dbReference>
<dbReference type="PRINTS" id="PR01084">
    <property type="entry name" value="NAHEXCHNGR"/>
</dbReference>
<dbReference type="PRINTS" id="PR01086">
    <property type="entry name" value="NAHEXCHNGR2"/>
</dbReference>
<reference key="1">
    <citation type="journal article" date="1993" name="J. Biol. Chem.">
        <title>Cloning and expression of a rabbit cDNA encoding a serum-activated ethylisopropylamiloride-resistant epithelial Na+/H+ exchanger isoform (NHE-2).</title>
        <authorList>
            <person name="Tse C.-M."/>
            <person name="Levine S.A."/>
            <person name="Yun C.H."/>
            <person name="Montrose M.H."/>
            <person name="Little P.J."/>
            <person name="Pouyssegur J."/>
            <person name="Donowitz M."/>
        </authorList>
    </citation>
    <scope>NUCLEOTIDE SEQUENCE [MRNA]</scope>
    <scope>SUBCELLULAR LOCATION</scope>
    <scope>TISSUE SPECIFICITY</scope>
    <scope>FUNCTION</scope>
    <scope>TRANSPORTER ACTIVITY</scope>
    <source>
        <strain>New Zealand white</strain>
    </source>
</reference>
<reference key="2">
    <citation type="journal article" date="1996" name="Am. J. Physiol.">
        <title>NHE2 and NHE3 are human and rabbit intestinal brush-border proteins.</title>
        <authorList>
            <person name="Hoogerwerf W.A."/>
            <person name="Tsao S.C."/>
            <person name="Devuyst O."/>
            <person name="Levine S.A."/>
            <person name="Yun C.H."/>
            <person name="Yip J.W."/>
            <person name="Cohen M.E."/>
            <person name="Wilson P.D."/>
            <person name="Lazenby A.J."/>
            <person name="Tse C.M."/>
            <person name="Donowitz M."/>
        </authorList>
    </citation>
    <scope>SUBCELLULAR LOCATION</scope>
    <scope>TISSUE SPECIFICITY</scope>
</reference>
<reference key="3">
    <citation type="journal article" date="1998" name="Am. J. Physiol.">
        <title>Quantitative contribution of NHE2 and NHE3 to rabbit ileal brush-border Na+/H+ exchange.</title>
        <authorList>
            <person name="Wormmeester L."/>
            <person name="Sanchez de Medina F."/>
            <person name="Kokke F."/>
            <person name="Tse C.M."/>
            <person name="Khurana S."/>
            <person name="Bowser J."/>
            <person name="Cohen M.E."/>
            <person name="Donowitz M."/>
        </authorList>
    </citation>
    <scope>FUNCTION</scope>
    <scope>TRANSPORTER ACTIVITY</scope>
</reference>
<reference key="4">
    <citation type="journal article" date="2001" name="Am. J. Physiol.">
        <title>Differential expression and regulation of Na(+)/H(+) exchanger isoforms in rabbit parietal and mucous cells.</title>
        <authorList>
            <person name="Rossmann H."/>
            <person name="Sonnentag T."/>
            <person name="Heinzmann A."/>
            <person name="Seidler B."/>
            <person name="Bachmann O."/>
            <person name="Vieillard-Baron D."/>
            <person name="Gregor M."/>
            <person name="Seidler U."/>
        </authorList>
    </citation>
    <scope>TISSUE SPECIFICITY</scope>
</reference>
<feature type="chain" id="PRO_0000052353" description="Sodium/hydrogen exchanger 2">
    <location>
        <begin position="1"/>
        <end position="809"/>
    </location>
</feature>
<feature type="transmembrane region" description="Helical" evidence="3">
    <location>
        <begin position="107"/>
        <end position="127"/>
    </location>
</feature>
<feature type="transmembrane region" description="Helical" evidence="3">
    <location>
        <begin position="138"/>
        <end position="158"/>
    </location>
</feature>
<feature type="transmembrane region" description="Helical" evidence="3">
    <location>
        <begin position="169"/>
        <end position="189"/>
    </location>
</feature>
<feature type="transmembrane region" description="Helical" evidence="3">
    <location>
        <begin position="209"/>
        <end position="229"/>
    </location>
</feature>
<feature type="transmembrane region" description="Helical" evidence="3">
    <location>
        <begin position="237"/>
        <end position="257"/>
    </location>
</feature>
<feature type="transmembrane region" description="Helical" evidence="3">
    <location>
        <begin position="278"/>
        <end position="298"/>
    </location>
</feature>
<feature type="transmembrane region" description="Helical" evidence="3">
    <location>
        <begin position="308"/>
        <end position="328"/>
    </location>
</feature>
<feature type="transmembrane region" description="Helical" evidence="3">
    <location>
        <begin position="361"/>
        <end position="381"/>
    </location>
</feature>
<feature type="transmembrane region" description="Helical" evidence="3">
    <location>
        <begin position="392"/>
        <end position="412"/>
    </location>
</feature>
<feature type="transmembrane region" description="Helical" evidence="3">
    <location>
        <begin position="430"/>
        <end position="450"/>
    </location>
</feature>
<feature type="transmembrane region" description="Helical" evidence="3">
    <location>
        <begin position="459"/>
        <end position="479"/>
    </location>
</feature>
<feature type="region of interest" description="Disordered" evidence="4">
    <location>
        <begin position="648"/>
        <end position="700"/>
    </location>
</feature>
<feature type="region of interest" description="Disordered" evidence="4">
    <location>
        <begin position="734"/>
        <end position="809"/>
    </location>
</feature>
<feature type="compositionally biased region" description="Basic and acidic residues" evidence="4">
    <location>
        <begin position="648"/>
        <end position="660"/>
    </location>
</feature>
<feature type="compositionally biased region" description="Basic and acidic residues" evidence="4">
    <location>
        <begin position="793"/>
        <end position="809"/>
    </location>
</feature>
<feature type="glycosylation site" description="N-linked (GlcNAc...) asparagine" evidence="3">
    <location>
        <position position="350"/>
    </location>
</feature>
<proteinExistence type="evidence at transcript level"/>
<evidence type="ECO:0000250" key="1">
    <source>
        <dbReference type="UniProtKB" id="P48763"/>
    </source>
</evidence>
<evidence type="ECO:0000250" key="2">
    <source>
        <dbReference type="UniProtKB" id="Q3ZAS0"/>
    </source>
</evidence>
<evidence type="ECO:0000255" key="3"/>
<evidence type="ECO:0000256" key="4">
    <source>
        <dbReference type="SAM" id="MobiDB-lite"/>
    </source>
</evidence>
<evidence type="ECO:0000269" key="5">
    <source>
    </source>
</evidence>
<evidence type="ECO:0000269" key="6">
    <source>
    </source>
</evidence>
<evidence type="ECO:0000269" key="7">
    <source>
    </source>
</evidence>
<evidence type="ECO:0000269" key="8">
    <source>
    </source>
</evidence>
<evidence type="ECO:0000305" key="9"/>
<comment type="function">
    <text evidence="2 6 8">Plasma membrane Na(+)/H(+) antiporter. Mediates the electroneutral exchange of intracellular H(+) ions for extracellular Na(+) (PubMed:7685025, PubMed:9612213). Major apical Na(+)/H(+) exchanger in the base of the colonic crypt. Controls in the colonic crypt intracellular pH (pHi) to direct colonic epithelial cell differentiation into the absorptive enterocyte lineage at the expense of the secretory lineage (By similarity).</text>
</comment>
<comment type="catalytic activity">
    <reaction evidence="6 8">
        <text>Na(+)(in) + H(+)(out) = Na(+)(out) + H(+)(in)</text>
        <dbReference type="Rhea" id="RHEA:29419"/>
        <dbReference type="ChEBI" id="CHEBI:15378"/>
        <dbReference type="ChEBI" id="CHEBI:29101"/>
    </reaction>
</comment>
<comment type="subunit">
    <text evidence="1">Interacts with CHP1 and CHP2.</text>
</comment>
<comment type="subcellular location">
    <subcellularLocation>
        <location evidence="6 7">Apical cell membrane</location>
        <topology evidence="3">Multi-pass membrane protein</topology>
    </subcellularLocation>
</comment>
<comment type="tissue specificity">
    <text evidence="5 6 7">High levels in intestine and kidney (PubMed:7685025, PubMed:8772498). Strongly expressed in gastric epithelial cells, with particularly high expression levels in mucous cells (PubMed:11447025).</text>
</comment>
<comment type="similarity">
    <text evidence="9">Belongs to the monovalent cation:proton antiporter 1 (CPA1) transporter (TC 2.A.36) family.</text>
</comment>
<comment type="caution">
    <text evidence="9">The number, localization and denomination of hydrophobic domains in the Na(+)/H(+) exchangers vary among authors.</text>
</comment>